<organism>
    <name type="scientific">Rhodopseudomonas palustris (strain HaA2)</name>
    <dbReference type="NCBI Taxonomy" id="316058"/>
    <lineage>
        <taxon>Bacteria</taxon>
        <taxon>Pseudomonadati</taxon>
        <taxon>Pseudomonadota</taxon>
        <taxon>Alphaproteobacteria</taxon>
        <taxon>Hyphomicrobiales</taxon>
        <taxon>Nitrobacteraceae</taxon>
        <taxon>Rhodopseudomonas</taxon>
    </lineage>
</organism>
<dbReference type="EMBL" id="CP000250">
    <property type="protein sequence ID" value="ABD07012.1"/>
    <property type="molecule type" value="Genomic_DNA"/>
</dbReference>
<dbReference type="RefSeq" id="WP_011441197.1">
    <property type="nucleotide sequence ID" value="NC_007778.1"/>
</dbReference>
<dbReference type="SMR" id="Q2IXP8"/>
<dbReference type="STRING" id="316058.RPB_2307"/>
<dbReference type="KEGG" id="rpb:RPB_2307"/>
<dbReference type="eggNOG" id="COG0094">
    <property type="taxonomic scope" value="Bacteria"/>
</dbReference>
<dbReference type="HOGENOM" id="CLU_061015_2_1_5"/>
<dbReference type="OrthoDB" id="9806626at2"/>
<dbReference type="Proteomes" id="UP000008809">
    <property type="component" value="Chromosome"/>
</dbReference>
<dbReference type="GO" id="GO:1990904">
    <property type="term" value="C:ribonucleoprotein complex"/>
    <property type="evidence" value="ECO:0007669"/>
    <property type="project" value="UniProtKB-KW"/>
</dbReference>
<dbReference type="GO" id="GO:0005840">
    <property type="term" value="C:ribosome"/>
    <property type="evidence" value="ECO:0007669"/>
    <property type="project" value="UniProtKB-KW"/>
</dbReference>
<dbReference type="GO" id="GO:0019843">
    <property type="term" value="F:rRNA binding"/>
    <property type="evidence" value="ECO:0007669"/>
    <property type="project" value="UniProtKB-UniRule"/>
</dbReference>
<dbReference type="GO" id="GO:0003735">
    <property type="term" value="F:structural constituent of ribosome"/>
    <property type="evidence" value="ECO:0007669"/>
    <property type="project" value="InterPro"/>
</dbReference>
<dbReference type="GO" id="GO:0000049">
    <property type="term" value="F:tRNA binding"/>
    <property type="evidence" value="ECO:0007669"/>
    <property type="project" value="UniProtKB-UniRule"/>
</dbReference>
<dbReference type="GO" id="GO:0006412">
    <property type="term" value="P:translation"/>
    <property type="evidence" value="ECO:0007669"/>
    <property type="project" value="UniProtKB-UniRule"/>
</dbReference>
<dbReference type="FunFam" id="3.30.1440.10:FF:000001">
    <property type="entry name" value="50S ribosomal protein L5"/>
    <property type="match status" value="1"/>
</dbReference>
<dbReference type="Gene3D" id="3.30.1440.10">
    <property type="match status" value="1"/>
</dbReference>
<dbReference type="HAMAP" id="MF_01333_B">
    <property type="entry name" value="Ribosomal_uL5_B"/>
    <property type="match status" value="1"/>
</dbReference>
<dbReference type="InterPro" id="IPR002132">
    <property type="entry name" value="Ribosomal_uL5"/>
</dbReference>
<dbReference type="InterPro" id="IPR020930">
    <property type="entry name" value="Ribosomal_uL5_bac-type"/>
</dbReference>
<dbReference type="InterPro" id="IPR031309">
    <property type="entry name" value="Ribosomal_uL5_C"/>
</dbReference>
<dbReference type="InterPro" id="IPR020929">
    <property type="entry name" value="Ribosomal_uL5_CS"/>
</dbReference>
<dbReference type="InterPro" id="IPR022803">
    <property type="entry name" value="Ribosomal_uL5_dom_sf"/>
</dbReference>
<dbReference type="InterPro" id="IPR031310">
    <property type="entry name" value="Ribosomal_uL5_N"/>
</dbReference>
<dbReference type="NCBIfam" id="NF000585">
    <property type="entry name" value="PRK00010.1"/>
    <property type="match status" value="1"/>
</dbReference>
<dbReference type="PANTHER" id="PTHR11994">
    <property type="entry name" value="60S RIBOSOMAL PROTEIN L11-RELATED"/>
    <property type="match status" value="1"/>
</dbReference>
<dbReference type="Pfam" id="PF00281">
    <property type="entry name" value="Ribosomal_L5"/>
    <property type="match status" value="1"/>
</dbReference>
<dbReference type="Pfam" id="PF00673">
    <property type="entry name" value="Ribosomal_L5_C"/>
    <property type="match status" value="1"/>
</dbReference>
<dbReference type="PIRSF" id="PIRSF002161">
    <property type="entry name" value="Ribosomal_L5"/>
    <property type="match status" value="1"/>
</dbReference>
<dbReference type="SUPFAM" id="SSF55282">
    <property type="entry name" value="RL5-like"/>
    <property type="match status" value="1"/>
</dbReference>
<dbReference type="PROSITE" id="PS00358">
    <property type="entry name" value="RIBOSOMAL_L5"/>
    <property type="match status" value="1"/>
</dbReference>
<accession>Q2IXP8</accession>
<comment type="function">
    <text evidence="1">This is one of the proteins that bind and probably mediate the attachment of the 5S RNA into the large ribosomal subunit, where it forms part of the central protuberance. In the 70S ribosome it contacts protein S13 of the 30S subunit (bridge B1b), connecting the 2 subunits; this bridge is implicated in subunit movement. Contacts the P site tRNA; the 5S rRNA and some of its associated proteins might help stabilize positioning of ribosome-bound tRNAs.</text>
</comment>
<comment type="subunit">
    <text evidence="1">Part of the 50S ribosomal subunit; part of the 5S rRNA/L5/L18/L25 subcomplex. Contacts the 5S rRNA and the P site tRNA. Forms a bridge to the 30S subunit in the 70S ribosome.</text>
</comment>
<comment type="similarity">
    <text evidence="1">Belongs to the universal ribosomal protein uL5 family.</text>
</comment>
<proteinExistence type="inferred from homology"/>
<sequence length="185" mass="20791">MAETAYVPRLRAEYDNSIRTQLTEKFGYGNVMQVPRLDKVVLNMGVGEAVNDRKKAEQAAADMALIAGQKAVVTYSRVAISTFKLRENQPIGCKVTLRKAKMYEFIDRLITVALPRVRDFRGLNPKSFDGRGNYSLGIKEHIIFPEIDFDKTGESWGMDITVCTTAGTDDEARALLTAFNFPFRQ</sequence>
<name>RL5_RHOP2</name>
<protein>
    <recommendedName>
        <fullName evidence="1">Large ribosomal subunit protein uL5</fullName>
    </recommendedName>
    <alternativeName>
        <fullName evidence="2">50S ribosomal protein L5</fullName>
    </alternativeName>
</protein>
<gene>
    <name evidence="1" type="primary">rplE</name>
    <name type="ordered locus">RPB_2307</name>
</gene>
<feature type="chain" id="PRO_0000243053" description="Large ribosomal subunit protein uL5">
    <location>
        <begin position="1"/>
        <end position="185"/>
    </location>
</feature>
<reference key="1">
    <citation type="submission" date="2006-01" db="EMBL/GenBank/DDBJ databases">
        <title>Complete sequence of Rhodopseudomonas palustris HaA2.</title>
        <authorList>
            <consortium name="US DOE Joint Genome Institute"/>
            <person name="Copeland A."/>
            <person name="Lucas S."/>
            <person name="Lapidus A."/>
            <person name="Barry K."/>
            <person name="Detter J.C."/>
            <person name="Glavina T."/>
            <person name="Hammon N."/>
            <person name="Israni S."/>
            <person name="Pitluck S."/>
            <person name="Chain P."/>
            <person name="Malfatti S."/>
            <person name="Shin M."/>
            <person name="Vergez L."/>
            <person name="Schmutz J."/>
            <person name="Larimer F."/>
            <person name="Land M."/>
            <person name="Hauser L."/>
            <person name="Pelletier D.A."/>
            <person name="Kyrpides N."/>
            <person name="Anderson I."/>
            <person name="Oda Y."/>
            <person name="Harwood C.S."/>
            <person name="Richardson P."/>
        </authorList>
    </citation>
    <scope>NUCLEOTIDE SEQUENCE [LARGE SCALE GENOMIC DNA]</scope>
    <source>
        <strain>HaA2</strain>
    </source>
</reference>
<evidence type="ECO:0000255" key="1">
    <source>
        <dbReference type="HAMAP-Rule" id="MF_01333"/>
    </source>
</evidence>
<evidence type="ECO:0000305" key="2"/>
<keyword id="KW-1185">Reference proteome</keyword>
<keyword id="KW-0687">Ribonucleoprotein</keyword>
<keyword id="KW-0689">Ribosomal protein</keyword>
<keyword id="KW-0694">RNA-binding</keyword>
<keyword id="KW-0699">rRNA-binding</keyword>
<keyword id="KW-0820">tRNA-binding</keyword>